<proteinExistence type="evidence at transcript level"/>
<organism>
    <name type="scientific">Cupiennius salei</name>
    <name type="common">American wandering spider</name>
    <dbReference type="NCBI Taxonomy" id="6928"/>
    <lineage>
        <taxon>Eukaryota</taxon>
        <taxon>Metazoa</taxon>
        <taxon>Ecdysozoa</taxon>
        <taxon>Arthropoda</taxon>
        <taxon>Chelicerata</taxon>
        <taxon>Arachnida</taxon>
        <taxon>Araneae</taxon>
        <taxon>Araneomorphae</taxon>
        <taxon>Entelegynae</taxon>
        <taxon>Lycosoidea</taxon>
        <taxon>Ctenidae</taxon>
        <taxon>Cupiennius</taxon>
    </lineage>
</organism>
<sequence>MWIPLLLVALVVPAIRCERKCGECNPEKCQPPSEECLAGLVKDLCGCCYVCGRREGELCDGDFLPIPYRNRGHGPCGEYLECRPRTDLAPGDPPEAMCVCLKTETLCGSDGKTYQNECQLTEARYKQRDGLRAMHRGPCKSAPKITSPPEEASNYTGGNIAMSCEATGWPIPVFEWRVDIGDGNTIPLPSDDPKVSVQSRGGPSKYEVTSWLQLLSIQPKDDATYWCIAKNDEGESSAAARVVVLDFRGSQTSQKGRDNDL</sequence>
<name>IGFBP_CUPSA</name>
<protein>
    <recommendedName>
        <fullName>Insulin-like growth factor-binding protein-related protein 1</fullName>
        <shortName>IGFBP-rP1</shortName>
    </recommendedName>
</protein>
<comment type="subcellular location">
    <subcellularLocation>
        <location evidence="1">Secreted</location>
    </subcellularLocation>
</comment>
<comment type="tissue specificity">
    <text>Expressed by the venom gland.</text>
</comment>
<evidence type="ECO:0000250" key="1"/>
<evidence type="ECO:0000255" key="2"/>
<evidence type="ECO:0000255" key="3">
    <source>
        <dbReference type="PROSITE-ProRule" id="PRU00653"/>
    </source>
</evidence>
<evidence type="ECO:0000255" key="4">
    <source>
        <dbReference type="PROSITE-ProRule" id="PRU00798"/>
    </source>
</evidence>
<evidence type="ECO:0000305" key="5"/>
<keyword id="KW-1015">Disulfide bond</keyword>
<keyword id="KW-0325">Glycoprotein</keyword>
<keyword id="KW-0393">Immunoglobulin domain</keyword>
<keyword id="KW-0646">Protease inhibitor</keyword>
<keyword id="KW-0964">Secreted</keyword>
<keyword id="KW-0722">Serine protease inhibitor</keyword>
<keyword id="KW-0732">Signal</keyword>
<dbReference type="EMBL" id="HE580155">
    <property type="protein sequence ID" value="CCD22034.1"/>
    <property type="molecule type" value="mRNA"/>
</dbReference>
<dbReference type="SMR" id="G4V4G1"/>
<dbReference type="ArachnoServer" id="AS001595">
    <property type="toxin name" value="IGFBP-rP1-1-Cupiennius salei"/>
</dbReference>
<dbReference type="GO" id="GO:0005576">
    <property type="term" value="C:extracellular region"/>
    <property type="evidence" value="ECO:0007669"/>
    <property type="project" value="UniProtKB-SubCell"/>
</dbReference>
<dbReference type="GO" id="GO:0005520">
    <property type="term" value="F:insulin-like growth factor binding"/>
    <property type="evidence" value="ECO:0007669"/>
    <property type="project" value="InterPro"/>
</dbReference>
<dbReference type="GO" id="GO:0004867">
    <property type="term" value="F:serine-type endopeptidase inhibitor activity"/>
    <property type="evidence" value="ECO:0007669"/>
    <property type="project" value="UniProtKB-KW"/>
</dbReference>
<dbReference type="GO" id="GO:0001558">
    <property type="term" value="P:regulation of cell growth"/>
    <property type="evidence" value="ECO:0007669"/>
    <property type="project" value="InterPro"/>
</dbReference>
<dbReference type="GO" id="GO:0009966">
    <property type="term" value="P:regulation of signal transduction"/>
    <property type="evidence" value="ECO:0007669"/>
    <property type="project" value="TreeGrafter"/>
</dbReference>
<dbReference type="CDD" id="cd00104">
    <property type="entry name" value="KAZAL_FS"/>
    <property type="match status" value="1"/>
</dbReference>
<dbReference type="FunFam" id="2.60.40.10:FF:000032">
    <property type="entry name" value="palladin isoform X1"/>
    <property type="match status" value="1"/>
</dbReference>
<dbReference type="Gene3D" id="3.30.60.30">
    <property type="match status" value="1"/>
</dbReference>
<dbReference type="Gene3D" id="4.10.40.20">
    <property type="match status" value="1"/>
</dbReference>
<dbReference type="Gene3D" id="2.60.40.10">
    <property type="entry name" value="Immunoglobulins"/>
    <property type="match status" value="1"/>
</dbReference>
<dbReference type="InterPro" id="IPR009030">
    <property type="entry name" value="Growth_fac_rcpt_cys_sf"/>
</dbReference>
<dbReference type="InterPro" id="IPR007110">
    <property type="entry name" value="Ig-like_dom"/>
</dbReference>
<dbReference type="InterPro" id="IPR036179">
    <property type="entry name" value="Ig-like_dom_sf"/>
</dbReference>
<dbReference type="InterPro" id="IPR013783">
    <property type="entry name" value="Ig-like_fold"/>
</dbReference>
<dbReference type="InterPro" id="IPR003599">
    <property type="entry name" value="Ig_sub"/>
</dbReference>
<dbReference type="InterPro" id="IPR003598">
    <property type="entry name" value="Ig_sub2"/>
</dbReference>
<dbReference type="InterPro" id="IPR000867">
    <property type="entry name" value="IGFBP-like"/>
</dbReference>
<dbReference type="InterPro" id="IPR011390">
    <property type="entry name" value="IGFBP_rP_mac25"/>
</dbReference>
<dbReference type="InterPro" id="IPR002350">
    <property type="entry name" value="Kazal_dom"/>
</dbReference>
<dbReference type="InterPro" id="IPR036058">
    <property type="entry name" value="Kazal_dom_sf"/>
</dbReference>
<dbReference type="PANTHER" id="PTHR14186">
    <property type="entry name" value="INSULIN-LIKE GROWTH FACTOR BINDING PROTEIN-RELATED"/>
    <property type="match status" value="1"/>
</dbReference>
<dbReference type="PANTHER" id="PTHR14186:SF19">
    <property type="entry name" value="INSULIN-LIKE GROWTH FACTOR-BINDING PROTEIN 7"/>
    <property type="match status" value="1"/>
</dbReference>
<dbReference type="Pfam" id="PF13927">
    <property type="entry name" value="Ig_3"/>
    <property type="match status" value="1"/>
</dbReference>
<dbReference type="Pfam" id="PF00219">
    <property type="entry name" value="IGFBP"/>
    <property type="match status" value="1"/>
</dbReference>
<dbReference type="Pfam" id="PF00050">
    <property type="entry name" value="Kazal_1"/>
    <property type="match status" value="1"/>
</dbReference>
<dbReference type="SMART" id="SM00121">
    <property type="entry name" value="IB"/>
    <property type="match status" value="1"/>
</dbReference>
<dbReference type="SMART" id="SM00409">
    <property type="entry name" value="IG"/>
    <property type="match status" value="1"/>
</dbReference>
<dbReference type="SMART" id="SM00408">
    <property type="entry name" value="IGc2"/>
    <property type="match status" value="1"/>
</dbReference>
<dbReference type="SMART" id="SM00280">
    <property type="entry name" value="KAZAL"/>
    <property type="match status" value="1"/>
</dbReference>
<dbReference type="SUPFAM" id="SSF57184">
    <property type="entry name" value="Growth factor receptor domain"/>
    <property type="match status" value="1"/>
</dbReference>
<dbReference type="SUPFAM" id="SSF48726">
    <property type="entry name" value="Immunoglobulin"/>
    <property type="match status" value="1"/>
</dbReference>
<dbReference type="SUPFAM" id="SSF100895">
    <property type="entry name" value="Kazal-type serine protease inhibitors"/>
    <property type="match status" value="1"/>
</dbReference>
<dbReference type="PROSITE" id="PS50835">
    <property type="entry name" value="IG_LIKE"/>
    <property type="match status" value="1"/>
</dbReference>
<dbReference type="PROSITE" id="PS51323">
    <property type="entry name" value="IGFBP_N_2"/>
    <property type="match status" value="1"/>
</dbReference>
<dbReference type="PROSITE" id="PS51465">
    <property type="entry name" value="KAZAL_2"/>
    <property type="match status" value="1"/>
</dbReference>
<feature type="signal peptide" evidence="2">
    <location>
        <begin position="1"/>
        <end position="17"/>
    </location>
</feature>
<feature type="chain" id="PRO_0000425734" description="Insulin-like growth factor-binding protein-related protein 1">
    <location>
        <begin position="18"/>
        <end position="261"/>
    </location>
</feature>
<feature type="domain" description="IGFBP N-terminal" evidence="3">
    <location>
        <begin position="18"/>
        <end position="101"/>
    </location>
</feature>
<feature type="domain" description="Kazal-like" evidence="4">
    <location>
        <begin position="70"/>
        <end position="141"/>
    </location>
</feature>
<feature type="domain" description="Ig-like C2-type">
    <location>
        <begin position="143"/>
        <end position="243"/>
    </location>
</feature>
<feature type="site" description="Reactive bond" evidence="5">
    <location>
        <begin position="102"/>
        <end position="103"/>
    </location>
</feature>
<feature type="glycosylation site" description="N-linked (GlcNAc...) asparagine" evidence="2">
    <location>
        <position position="154"/>
    </location>
</feature>
<feature type="disulfide bond" evidence="3">
    <location>
        <begin position="21"/>
        <end position="45"/>
    </location>
</feature>
<feature type="disulfide bond" evidence="3">
    <location>
        <begin position="24"/>
        <end position="47"/>
    </location>
</feature>
<feature type="disulfide bond" evidence="3">
    <location>
        <begin position="29"/>
        <end position="48"/>
    </location>
</feature>
<feature type="disulfide bond" evidence="3">
    <location>
        <begin position="36"/>
        <end position="51"/>
    </location>
</feature>
<feature type="disulfide bond" evidence="3">
    <location>
        <begin position="59"/>
        <end position="82"/>
    </location>
</feature>
<feature type="disulfide bond" evidence="3">
    <location>
        <begin position="76"/>
        <end position="98"/>
    </location>
</feature>
<feature type="disulfide bond" evidence="5">
    <location>
        <begin position="100"/>
        <end position="118"/>
    </location>
</feature>
<feature type="disulfide bond" evidence="1">
    <location>
        <begin position="107"/>
        <end position="139"/>
    </location>
</feature>
<feature type="disulfide bond" evidence="1">
    <location>
        <begin position="164"/>
        <end position="227"/>
    </location>
</feature>
<reference key="1">
    <citation type="journal article" date="2011" name="Insect Biochem. Mol. Biol.">
        <title>Purification, cDNA structure and biological significance of a single insulin-like growth factor-binding domain protein (SIBD-1) identified in the hemocytes of the spider Cupiennius salei.</title>
        <authorList>
            <person name="Kuhn-Nentwig L."/>
            <person name="Largiader C.R."/>
            <person name="Streitberger K."/>
            <person name="Chandru S."/>
            <person name="Baumann T."/>
            <person name="Kampfer U."/>
            <person name="Schaller J."/>
            <person name="Schurch S."/>
            <person name="Nentwig W."/>
        </authorList>
    </citation>
    <scope>NUCLEOTIDE SEQUENCE [MRNA]</scope>
    <source>
        <tissue>Venom gland</tissue>
    </source>
</reference>
<accession>G4V4G1</accession>